<comment type="function">
    <text evidence="4">Histone methyltransferase that specifically methylates histone H3 to form H3K79me. This methylation is required for telomere silencing, correct growth and development, and for resistance to DNA damage induced by UV LIGHT.</text>
</comment>
<comment type="catalytic activity">
    <reaction evidence="1 2">
        <text>L-lysyl(79)-[histone H3] + 3 S-adenosyl-L-methionine = N(6),N(6),N(6)-trimethyl-L-lysyl(79)-[histone H3] + 3 S-adenosyl-L-homocysteine + 3 H(+)</text>
        <dbReference type="Rhea" id="RHEA:60328"/>
        <dbReference type="Rhea" id="RHEA-COMP:15549"/>
        <dbReference type="Rhea" id="RHEA-COMP:15552"/>
        <dbReference type="ChEBI" id="CHEBI:15378"/>
        <dbReference type="ChEBI" id="CHEBI:29969"/>
        <dbReference type="ChEBI" id="CHEBI:57856"/>
        <dbReference type="ChEBI" id="CHEBI:59789"/>
        <dbReference type="ChEBI" id="CHEBI:61961"/>
        <dbReference type="EC" id="2.1.1.360"/>
    </reaction>
</comment>
<comment type="subcellular location">
    <subcellularLocation>
        <location evidence="1">Nucleus</location>
    </subcellularLocation>
</comment>
<comment type="developmental stage">
    <text evidence="4">Expressed during the whole life cycle.</text>
</comment>
<comment type="disruption phenotype">
    <text evidence="4">Individuals exhibit 4-5 hours delay in development. Development does progress with fewer fruiting bodies and smaller spore heads. No apparent changes in cell cycle regulation.</text>
</comment>
<comment type="miscellaneous">
    <text evidence="5">In contrast to other lysine histone methyltransferases, it does not contain a SET domain, suggesting the existence of another mechanism for methylation of lysine residues of histones.</text>
</comment>
<comment type="similarity">
    <text evidence="2">Belongs to the class I-like SAM-binding methyltransferase superfamily. DOT1 family.</text>
</comment>
<organism>
    <name type="scientific">Dictyostelium discoideum</name>
    <name type="common">Social amoeba</name>
    <dbReference type="NCBI Taxonomy" id="44689"/>
    <lineage>
        <taxon>Eukaryota</taxon>
        <taxon>Amoebozoa</taxon>
        <taxon>Evosea</taxon>
        <taxon>Eumycetozoa</taxon>
        <taxon>Dictyostelia</taxon>
        <taxon>Dictyosteliales</taxon>
        <taxon>Dictyosteliaceae</taxon>
        <taxon>Dictyostelium</taxon>
    </lineage>
</organism>
<keyword id="KW-0156">Chromatin regulator</keyword>
<keyword id="KW-0227">DNA damage</keyword>
<keyword id="KW-0234">DNA repair</keyword>
<keyword id="KW-0489">Methyltransferase</keyword>
<keyword id="KW-0539">Nucleus</keyword>
<keyword id="KW-1185">Reference proteome</keyword>
<keyword id="KW-0677">Repeat</keyword>
<keyword id="KW-0949">S-adenosyl-L-methionine</keyword>
<keyword id="KW-0804">Transcription</keyword>
<keyword id="KW-0805">Transcription regulation</keyword>
<keyword id="KW-0808">Transferase</keyword>
<proteinExistence type="evidence at transcript level"/>
<name>DOT1L_DICDI</name>
<reference evidence="7" key="1">
    <citation type="journal article" date="2002" name="Nature">
        <title>Sequence and analysis of chromosome 2 of Dictyostelium discoideum.</title>
        <authorList>
            <person name="Gloeckner G."/>
            <person name="Eichinger L."/>
            <person name="Szafranski K."/>
            <person name="Pachebat J.A."/>
            <person name="Bankier A.T."/>
            <person name="Dear P.H."/>
            <person name="Lehmann R."/>
            <person name="Baumgart C."/>
            <person name="Parra G."/>
            <person name="Abril J.F."/>
            <person name="Guigo R."/>
            <person name="Kumpf K."/>
            <person name="Tunggal B."/>
            <person name="Cox E.C."/>
            <person name="Quail M.A."/>
            <person name="Platzer M."/>
            <person name="Rosenthal A."/>
            <person name="Noegel A.A."/>
        </authorList>
    </citation>
    <scope>NUCLEOTIDE SEQUENCE [LARGE SCALE GENOMIC DNA]</scope>
    <source>
        <strain>AX4</strain>
    </source>
</reference>
<reference evidence="7" key="2">
    <citation type="journal article" date="2005" name="Nature">
        <title>The genome of the social amoeba Dictyostelium discoideum.</title>
        <authorList>
            <person name="Eichinger L."/>
            <person name="Pachebat J.A."/>
            <person name="Gloeckner G."/>
            <person name="Rajandream M.A."/>
            <person name="Sucgang R."/>
            <person name="Berriman M."/>
            <person name="Song J."/>
            <person name="Olsen R."/>
            <person name="Szafranski K."/>
            <person name="Xu Q."/>
            <person name="Tunggal B."/>
            <person name="Kummerfeld S."/>
            <person name="Madera M."/>
            <person name="Konfortov B.A."/>
            <person name="Rivero F."/>
            <person name="Bankier A.T."/>
            <person name="Lehmann R."/>
            <person name="Hamlin N."/>
            <person name="Davies R."/>
            <person name="Gaudet P."/>
            <person name="Fey P."/>
            <person name="Pilcher K."/>
            <person name="Chen G."/>
            <person name="Saunders D."/>
            <person name="Sodergren E.J."/>
            <person name="Davis P."/>
            <person name="Kerhornou A."/>
            <person name="Nie X."/>
            <person name="Hall N."/>
            <person name="Anjard C."/>
            <person name="Hemphill L."/>
            <person name="Bason N."/>
            <person name="Farbrother P."/>
            <person name="Desany B."/>
            <person name="Just E."/>
            <person name="Morio T."/>
            <person name="Rost R."/>
            <person name="Churcher C.M."/>
            <person name="Cooper J."/>
            <person name="Haydock S."/>
            <person name="van Driessche N."/>
            <person name="Cronin A."/>
            <person name="Goodhead I."/>
            <person name="Muzny D.M."/>
            <person name="Mourier T."/>
            <person name="Pain A."/>
            <person name="Lu M."/>
            <person name="Harper D."/>
            <person name="Lindsay R."/>
            <person name="Hauser H."/>
            <person name="James K.D."/>
            <person name="Quiles M."/>
            <person name="Madan Babu M."/>
            <person name="Saito T."/>
            <person name="Buchrieser C."/>
            <person name="Wardroper A."/>
            <person name="Felder M."/>
            <person name="Thangavelu M."/>
            <person name="Johnson D."/>
            <person name="Knights A."/>
            <person name="Loulseged H."/>
            <person name="Mungall K.L."/>
            <person name="Oliver K."/>
            <person name="Price C."/>
            <person name="Quail M.A."/>
            <person name="Urushihara H."/>
            <person name="Hernandez J."/>
            <person name="Rabbinowitsch E."/>
            <person name="Steffen D."/>
            <person name="Sanders M."/>
            <person name="Ma J."/>
            <person name="Kohara Y."/>
            <person name="Sharp S."/>
            <person name="Simmonds M.N."/>
            <person name="Spiegler S."/>
            <person name="Tivey A."/>
            <person name="Sugano S."/>
            <person name="White B."/>
            <person name="Walker D."/>
            <person name="Woodward J.R."/>
            <person name="Winckler T."/>
            <person name="Tanaka Y."/>
            <person name="Shaulsky G."/>
            <person name="Schleicher M."/>
            <person name="Weinstock G.M."/>
            <person name="Rosenthal A."/>
            <person name="Cox E.C."/>
            <person name="Chisholm R.L."/>
            <person name="Gibbs R.A."/>
            <person name="Loomis W.F."/>
            <person name="Platzer M."/>
            <person name="Kay R.R."/>
            <person name="Williams J.G."/>
            <person name="Dear P.H."/>
            <person name="Noegel A.A."/>
            <person name="Barrell B.G."/>
            <person name="Kuspa A."/>
        </authorList>
    </citation>
    <scope>NUCLEOTIDE SEQUENCE [LARGE SCALE GENOMIC DNA]</scope>
    <source>
        <strain>AX4</strain>
    </source>
</reference>
<reference evidence="6" key="3">
    <citation type="journal article" date="2011" name="Biochem. Biophys. Res. Commun.">
        <title>The histone methyltransferase Dot1 is required for DNA damage repair and proper development in Dictyostelium.</title>
        <authorList>
            <person name="Muller-Taubenberger A."/>
            <person name="Bonisch C."/>
            <person name="Furbringer M."/>
            <person name="Wittek F."/>
            <person name="Hake S.B."/>
        </authorList>
    </citation>
    <scope>FUNCTION</scope>
    <scope>DEVELOPMENTAL STAGE</scope>
    <scope>DISRUPTION PHENOTYPE</scope>
    <source>
        <strain evidence="4">AX2</strain>
    </source>
</reference>
<sequence>MSTNSTPRKQKLSNSKSLQNSPISPTVKKTNSFPLGNNIPTNINRSKKDKNNNSNNNINNNNSNGIGSNTIINSTPIATTPVPPLPFIHSSSSSSSSPSPSSSSSSPFPKAKKSPSLSINQQQQQQPQQPQQSPQSQQSPQSQQSQQSQQQQPQQPQEQQEPLPNLSFLRNQEPDKNVLPTSRKRPPSVMPSTPNQSSNSSSLNSSLNFSSSNSSPSPTSTQSNNSRFETRSQNDQYENNNNNNNNNNNNNNNNNNNNNNNNNIECIVIDDDDDDDDDEGNSIKSTHTSTQSTPIRDRRQRDNKWTINPLPQFQREIIDVDTPSPPNESLSIVSQTTTNTITDTTSIQTPTLIRQSSSLLSSSSSLSPSTTSTPLTQNNINLQNAQVIATMTAPMEIELPTIVQLEPLFSSEFTTSTQNLFIQTPPFTSTLTLPTTTAQTSQTLFTIQTSHDINNNNNNNNNNKNKNKNKKEIEKEKEKLREALKQKLKEYENENEKEREKERKREREIEIERERKERERKEREKERKKEKEREREREERERKEIERKEREREEREERERKEIERKETERKEIERKEIERKEIERKERERKERKEREEREEREREERERKEREEREKEIEMEREKKKEKEKEKEKEKEKEKEKEKEKEKEKEKEKEKEKKRKENEVENEIEKERREKNDSYMVLNYHHSIDDHHSESESESDSDQDSIYSISTQELSSVISDNDFCDSDNEKVANNNRTVGETFLNDSRNNNNNNNNNKNNNNKKIENDKNQLIERERLISAFNDKAFLYALDTIREVLGGIDFKLKVSKEQIIEISTNAKKPLNILSEPEQQQQQQQQQQQQQHQQQQQQQQQQQQQQQQQTTKTTTTTNNTTTTTAETEKPKEVFLLKKPIKIPYGRDCKKRLIRRFHGTSRNPLFHKNLESTLKLLKRAKFDWASIEFDTKSYLMNCNCKTVCHKSERMKDNPTNKLQNNNRNNNNNNNNIINNNNNNNNKNNNNKNNNNKNNNRNNNSIAKKIGTNNNNNNTTIIKNNNNNNNNNNNNNNNNNNIIKNNNNNNKNNNNNNNTIVKKIETIKKDINKKPTKTTTTTSSSSSSTSSSNSLTVIKKPVKKINGSQRICLFEDDFDVGIGVPVTTGTSETTTTRASSIRRKMNISNIFDDFTKKPRQNKYNEIEMPDLFASKECNYTLEQQAPFIRAQKLLLTQQHENNLYNGKRFMKYDEWLDLYHGEMRSSIQNPKVLKHYISFSQEVYGEAEPTLLRHWIHLGLIKPTDVFCDIGCGIGNVLFQLAAQVGCRVIGVEIRKDLYDISQSMLEIYKKRSLELGLHPSTQQIKIYNCDVKGSLEFDFSEPNVFFMHNTCFGPELEISIMELFKKYSKPGTKVITMKTLCPRFKPSDKKTKPWGIFKYPYESYEMEEGSLSWRSATNCSFYSFTIDDKDSDIVTDQTHLNRVILSTPKKKHSKLQLFSSSSLPSSPPSSSSSSSPPNIATNTTTTTTTTTTTSPSSISLPSPYLSPSKKTPNSNKRDRSDIDNSNSDDGDENNNNININNNNNNSNNKPIKLKLSMDHSIDNQSNSESSDTDVEYMPWSKRNNRKKRKSLSYSLDSYLSSRISPSLSLSTSSSSSSSLDSSPYSSPPSSSSSDNENDDDNGDDEDDSSSSNDTKLKEKLLLMKNNEKIGGAPPLTRRNANSDTNKLVQGCYQSLSSYALPKEESQIHKLQLQAKLLEHKNSLVLKHQKSIHDQQKRLSRKQKKLAKKNKKKEQQLQAQAKTINYNNNNNNNNQNDNQVNHNNLNENEINTDLINGYNNNNNNNIINNDNDNDNDNDKDDDKDSNNKDYNNINDNNK</sequence>
<evidence type="ECO:0000250" key="1">
    <source>
        <dbReference type="UniProtKB" id="Q04089"/>
    </source>
</evidence>
<evidence type="ECO:0000255" key="2">
    <source>
        <dbReference type="PROSITE-ProRule" id="PRU00902"/>
    </source>
</evidence>
<evidence type="ECO:0000256" key="3">
    <source>
        <dbReference type="SAM" id="MobiDB-lite"/>
    </source>
</evidence>
<evidence type="ECO:0000269" key="4">
    <source>
    </source>
</evidence>
<evidence type="ECO:0000303" key="5">
    <source>
    </source>
</evidence>
<evidence type="ECO:0000305" key="6"/>
<evidence type="ECO:0000312" key="7">
    <source>
        <dbReference type="EMBL" id="EAL71677.2"/>
    </source>
</evidence>
<dbReference type="EC" id="2.1.1.360" evidence="1"/>
<dbReference type="EMBL" id="AAFI02000006">
    <property type="protein sequence ID" value="EAL71677.2"/>
    <property type="molecule type" value="Genomic_DNA"/>
</dbReference>
<dbReference type="RefSeq" id="XP_645574.2">
    <property type="nucleotide sequence ID" value="XM_640482.2"/>
</dbReference>
<dbReference type="SMR" id="Q55AX2"/>
<dbReference type="FunCoup" id="Q55AX2">
    <property type="interactions" value="384"/>
</dbReference>
<dbReference type="STRING" id="44689.Q55AX2"/>
<dbReference type="PaxDb" id="44689-DDB0233511"/>
<dbReference type="EnsemblProtists" id="EAL71677">
    <property type="protein sequence ID" value="EAL71677"/>
    <property type="gene ID" value="DDB_G0271626"/>
</dbReference>
<dbReference type="GeneID" id="8618027"/>
<dbReference type="KEGG" id="ddi:DDB_G0271626"/>
<dbReference type="dictyBase" id="DDB_G0271626">
    <property type="gene designation" value="dotA"/>
</dbReference>
<dbReference type="VEuPathDB" id="AmoebaDB:DDB_G0271626"/>
<dbReference type="eggNOG" id="KOG3924">
    <property type="taxonomic scope" value="Eukaryota"/>
</dbReference>
<dbReference type="HOGENOM" id="CLU_237041_0_0_1"/>
<dbReference type="InParanoid" id="Q55AX2"/>
<dbReference type="Reactome" id="R-DDI-3214841">
    <property type="pathway name" value="PKMTs methylate histone lysines"/>
</dbReference>
<dbReference type="PRO" id="PR:Q55AX2"/>
<dbReference type="Proteomes" id="UP000002195">
    <property type="component" value="Chromosome 2"/>
</dbReference>
<dbReference type="GO" id="GO:0000781">
    <property type="term" value="C:chromosome, telomeric region"/>
    <property type="evidence" value="ECO:0007669"/>
    <property type="project" value="GOC"/>
</dbReference>
<dbReference type="GO" id="GO:0005634">
    <property type="term" value="C:nucleus"/>
    <property type="evidence" value="ECO:0000314"/>
    <property type="project" value="dictyBase"/>
</dbReference>
<dbReference type="GO" id="GO:0031151">
    <property type="term" value="F:histone H3K79 methyltransferase activity"/>
    <property type="evidence" value="ECO:0000314"/>
    <property type="project" value="dictyBase"/>
</dbReference>
<dbReference type="GO" id="GO:0140956">
    <property type="term" value="F:histone H3K79 trimethyltransferase activity"/>
    <property type="evidence" value="ECO:0007669"/>
    <property type="project" value="UniProtKB-EC"/>
</dbReference>
<dbReference type="GO" id="GO:0000077">
    <property type="term" value="P:DNA damage checkpoint signaling"/>
    <property type="evidence" value="ECO:0000318"/>
    <property type="project" value="GO_Central"/>
</dbReference>
<dbReference type="GO" id="GO:0006281">
    <property type="term" value="P:DNA repair"/>
    <property type="evidence" value="ECO:0000315"/>
    <property type="project" value="dictyBase"/>
</dbReference>
<dbReference type="GO" id="GO:0032259">
    <property type="term" value="P:methylation"/>
    <property type="evidence" value="ECO:0007669"/>
    <property type="project" value="UniProtKB-KW"/>
</dbReference>
<dbReference type="GO" id="GO:0031156">
    <property type="term" value="P:regulation of sorocarp development"/>
    <property type="evidence" value="ECO:0000315"/>
    <property type="project" value="dictyBase"/>
</dbReference>
<dbReference type="GO" id="GO:0031509">
    <property type="term" value="P:subtelomeric heterochromatin formation"/>
    <property type="evidence" value="ECO:0000318"/>
    <property type="project" value="GO_Central"/>
</dbReference>
<dbReference type="CDD" id="cd02440">
    <property type="entry name" value="AdoMet_MTases"/>
    <property type="match status" value="1"/>
</dbReference>
<dbReference type="Gene3D" id="3.40.50.150">
    <property type="entry name" value="Vaccinia Virus protein VP39"/>
    <property type="match status" value="1"/>
</dbReference>
<dbReference type="InterPro" id="IPR025789">
    <property type="entry name" value="DOT1_dom"/>
</dbReference>
<dbReference type="InterPro" id="IPR030445">
    <property type="entry name" value="H3-K79_meTrfase"/>
</dbReference>
<dbReference type="InterPro" id="IPR029063">
    <property type="entry name" value="SAM-dependent_MTases_sf"/>
</dbReference>
<dbReference type="PANTHER" id="PTHR21451">
    <property type="entry name" value="HISTONE H3 METHYLTRANSFERASE"/>
    <property type="match status" value="1"/>
</dbReference>
<dbReference type="PANTHER" id="PTHR21451:SF0">
    <property type="entry name" value="HISTONE-LYSINE N-METHYLTRANSFERASE, H3 LYSINE-79 SPECIFIC"/>
    <property type="match status" value="1"/>
</dbReference>
<dbReference type="Pfam" id="PF08123">
    <property type="entry name" value="DOT1"/>
    <property type="match status" value="1"/>
</dbReference>
<dbReference type="SUPFAM" id="SSF81995">
    <property type="entry name" value="beta-sandwich domain of Sec23/24"/>
    <property type="match status" value="1"/>
</dbReference>
<dbReference type="SUPFAM" id="SSF53335">
    <property type="entry name" value="S-adenosyl-L-methionine-dependent methyltransferases"/>
    <property type="match status" value="1"/>
</dbReference>
<dbReference type="PROSITE" id="PS51569">
    <property type="entry name" value="DOT1"/>
    <property type="match status" value="1"/>
</dbReference>
<accession>Q55AX2</accession>
<feature type="chain" id="PRO_0000413849" description="Histone-lysine N-methyltransferase, H3 lysine-79 specific">
    <location>
        <begin position="1"/>
        <end position="1845"/>
    </location>
</feature>
<feature type="domain" description="DOT1" evidence="2">
    <location>
        <begin position="1125"/>
        <end position="1446"/>
    </location>
</feature>
<feature type="region of interest" description="Disordered" evidence="3">
    <location>
        <begin position="1"/>
        <end position="67"/>
    </location>
</feature>
<feature type="region of interest" description="Disordered" evidence="3">
    <location>
        <begin position="83"/>
        <end position="306"/>
    </location>
</feature>
<feature type="region of interest" description="Disordered" evidence="3">
    <location>
        <begin position="450"/>
        <end position="470"/>
    </location>
</feature>
<feature type="region of interest" description="Disordered" evidence="3">
    <location>
        <begin position="486"/>
        <end position="571"/>
    </location>
</feature>
<feature type="region of interest" description="Disordered" evidence="3">
    <location>
        <begin position="585"/>
        <end position="681"/>
    </location>
</feature>
<feature type="region of interest" description="Required for interaction with nucleosomes and DNA" evidence="1">
    <location>
        <begin position="625"/>
        <end position="639"/>
    </location>
</feature>
<feature type="region of interest" description="Disordered" evidence="3">
    <location>
        <begin position="741"/>
        <end position="767"/>
    </location>
</feature>
<feature type="region of interest" description="Disordered" evidence="3">
    <location>
        <begin position="862"/>
        <end position="881"/>
    </location>
</feature>
<feature type="region of interest" description="Disordered" evidence="3">
    <location>
        <begin position="963"/>
        <end position="1102"/>
    </location>
</feature>
<feature type="region of interest" description="Disordered" evidence="3">
    <location>
        <begin position="1463"/>
        <end position="1559"/>
    </location>
</feature>
<feature type="region of interest" description="Disordered" evidence="3">
    <location>
        <begin position="1610"/>
        <end position="1661"/>
    </location>
</feature>
<feature type="region of interest" description="Disordered" evidence="3">
    <location>
        <begin position="1735"/>
        <end position="1762"/>
    </location>
</feature>
<feature type="region of interest" description="Disordered" evidence="3">
    <location>
        <begin position="1772"/>
        <end position="1791"/>
    </location>
</feature>
<feature type="region of interest" description="Disordered" evidence="3">
    <location>
        <begin position="1799"/>
        <end position="1845"/>
    </location>
</feature>
<feature type="compositionally biased region" description="Polar residues" evidence="3">
    <location>
        <begin position="1"/>
        <end position="44"/>
    </location>
</feature>
<feature type="compositionally biased region" description="Low complexity" evidence="3">
    <location>
        <begin position="52"/>
        <end position="67"/>
    </location>
</feature>
<feature type="compositionally biased region" description="Low complexity" evidence="3">
    <location>
        <begin position="90"/>
        <end position="162"/>
    </location>
</feature>
<feature type="compositionally biased region" description="Low complexity" evidence="3">
    <location>
        <begin position="191"/>
        <end position="226"/>
    </location>
</feature>
<feature type="compositionally biased region" description="Low complexity" evidence="3">
    <location>
        <begin position="239"/>
        <end position="263"/>
    </location>
</feature>
<feature type="compositionally biased region" description="Acidic residues" evidence="3">
    <location>
        <begin position="268"/>
        <end position="280"/>
    </location>
</feature>
<feature type="compositionally biased region" description="Polar residues" evidence="3">
    <location>
        <begin position="282"/>
        <end position="294"/>
    </location>
</feature>
<feature type="compositionally biased region" description="Basic and acidic residues" evidence="3">
    <location>
        <begin position="295"/>
        <end position="304"/>
    </location>
</feature>
<feature type="compositionally biased region" description="Low complexity" evidence="3">
    <location>
        <begin position="453"/>
        <end position="464"/>
    </location>
</feature>
<feature type="compositionally biased region" description="Basic and acidic residues" evidence="3">
    <location>
        <begin position="585"/>
        <end position="679"/>
    </location>
</feature>
<feature type="compositionally biased region" description="Low complexity" evidence="3">
    <location>
        <begin position="750"/>
        <end position="763"/>
    </location>
</feature>
<feature type="compositionally biased region" description="Low complexity" evidence="3">
    <location>
        <begin position="862"/>
        <end position="877"/>
    </location>
</feature>
<feature type="compositionally biased region" description="Low complexity" evidence="3">
    <location>
        <begin position="972"/>
        <end position="1011"/>
    </location>
</feature>
<feature type="compositionally biased region" description="Low complexity" evidence="3">
    <location>
        <begin position="1020"/>
        <end position="1067"/>
    </location>
</feature>
<feature type="compositionally biased region" description="Basic and acidic residues" evidence="3">
    <location>
        <begin position="1069"/>
        <end position="1080"/>
    </location>
</feature>
<feature type="compositionally biased region" description="Low complexity" evidence="3">
    <location>
        <begin position="1084"/>
        <end position="1102"/>
    </location>
</feature>
<feature type="compositionally biased region" description="Low complexity" evidence="3">
    <location>
        <begin position="1467"/>
        <end position="1522"/>
    </location>
</feature>
<feature type="compositionally biased region" description="Low complexity" evidence="3">
    <location>
        <begin position="1541"/>
        <end position="1556"/>
    </location>
</feature>
<feature type="compositionally biased region" description="Low complexity" evidence="3">
    <location>
        <begin position="1610"/>
        <end position="1642"/>
    </location>
</feature>
<feature type="compositionally biased region" description="Acidic residues" evidence="3">
    <location>
        <begin position="1643"/>
        <end position="1656"/>
    </location>
</feature>
<feature type="compositionally biased region" description="Basic residues" evidence="3">
    <location>
        <begin position="1745"/>
        <end position="1759"/>
    </location>
</feature>
<feature type="compositionally biased region" description="Low complexity" evidence="3">
    <location>
        <begin position="1799"/>
        <end position="1817"/>
    </location>
</feature>
<feature type="compositionally biased region" description="Low complexity" evidence="3">
    <location>
        <begin position="1835"/>
        <end position="1845"/>
    </location>
</feature>
<feature type="binding site" evidence="2">
    <location>
        <begin position="1251"/>
        <end position="1254"/>
    </location>
    <ligand>
        <name>S-adenosyl-L-methionine</name>
        <dbReference type="ChEBI" id="CHEBI:59789"/>
    </ligand>
</feature>
<feature type="binding site" evidence="2">
    <location>
        <begin position="1274"/>
        <end position="1283"/>
    </location>
    <ligand>
        <name>S-adenosyl-L-methionine</name>
        <dbReference type="ChEBI" id="CHEBI:59789"/>
    </ligand>
</feature>
<feature type="binding site" evidence="1 2">
    <location>
        <position position="1300"/>
    </location>
    <ligand>
        <name>S-adenosyl-L-methionine</name>
        <dbReference type="ChEBI" id="CHEBI:59789"/>
    </ligand>
</feature>
<gene>
    <name evidence="7" type="primary">dotA</name>
    <name evidence="5" type="synonym">dot1</name>
    <name evidence="5" type="synonym">KMT4</name>
    <name type="ORF">DDB_G0271626</name>
</gene>
<protein>
    <recommendedName>
        <fullName evidence="5">Histone-lysine N-methyltransferase, H3 lysine-79 specific</fullName>
        <ecNumber evidence="1">2.1.1.360</ecNumber>
    </recommendedName>
    <alternativeName>
        <fullName evidence="5">Disruptor of telomeric silencing A</fullName>
    </alternativeName>
    <alternativeName>
        <fullName evidence="1">Histone H3-K79 methyltransferase</fullName>
        <shortName evidence="1">H3-K79-HMTase</shortName>
    </alternativeName>
    <alternativeName>
        <fullName evidence="7">SAM domain-containing protein</fullName>
    </alternativeName>
</protein>